<keyword id="KW-1015">Disulfide bond</keyword>
<keyword id="KW-0325">Glycoprotein</keyword>
<keyword id="KW-0328">Glycosyltransferase</keyword>
<keyword id="KW-0333">Golgi apparatus</keyword>
<keyword id="KW-0464">Manganese</keyword>
<keyword id="KW-0472">Membrane</keyword>
<keyword id="KW-0479">Metal-binding</keyword>
<keyword id="KW-1185">Reference proteome</keyword>
<keyword id="KW-0735">Signal-anchor</keyword>
<keyword id="KW-0808">Transferase</keyword>
<keyword id="KW-0812">Transmembrane</keyword>
<keyword id="KW-1133">Transmembrane helix</keyword>
<name>MGAT2_PIG</name>
<gene>
    <name type="primary">MGAT2</name>
    <name type="synonym">GNT2</name>
</gene>
<sequence>MRFRIYKRKVLILTFVVAACGFVLWSSNGRQRKNEALAPPLLDAEPVRGAGARAGDHPAISVGIRRGSNDSAAPLVAAAPQPEVDNLTLRYRSLVYQLNFDQTLRNVDKVSSWVPRELVLVVQVHNRAEYLKLLLDSLRKAQGIDNVLVIFSHDFWSTEINQLIAGVDFCPVLQVFFPFSIQLYPNEFPGTDPRDCPRDLEKNAALKMGCINAEYPDSFGHYREAKFSQTKHHWWWKLHFVWERVKVLRDYAGLILFLEEDHYVAPDFYHVFKKMWNLKQQECPECDVLSLGTYTTVRSFRDVADKVDVKTWKSTEHNMGLALTRDAYQKLIECTDTFCTYDDYNWDWTLQYLTVSCLPKFWKVLVPQVPRIFHAGDCGMHHKKTCRPSTQSAQIESLLNSNKQYMFPETLTISEKLTAALSPPRKNGGWGDIRDHELCKSYRRLQ</sequence>
<accession>O19071</accession>
<protein>
    <recommendedName>
        <fullName>Alpha-1,6-mannosyl-glycoprotein 2-beta-N-acetylglucosaminyltransferase</fullName>
        <ecNumber evidence="1">2.4.1.143</ecNumber>
    </recommendedName>
    <alternativeName>
        <fullName>Beta-1,2-N-acetylglucosaminyltransferase II</fullName>
    </alternativeName>
    <alternativeName>
        <fullName>GlcNAc-T II</fullName>
        <shortName>GNT-II</shortName>
    </alternativeName>
    <alternativeName>
        <fullName>Mannoside acetylglucosaminyltransferase 2</fullName>
    </alternativeName>
    <alternativeName>
        <fullName>N-glycosyl-oligosaccharide-glycoprotein N-acetylglucosaminyltransferase II</fullName>
    </alternativeName>
</protein>
<proteinExistence type="inferred from homology"/>
<evidence type="ECO:0000250" key="1">
    <source>
        <dbReference type="UniProtKB" id="Q10469"/>
    </source>
</evidence>
<evidence type="ECO:0000255" key="2"/>
<evidence type="ECO:0000305" key="3"/>
<reference key="1">
    <citation type="journal article" date="1997" name="Biochim. Biophys. Acta">
        <title>Molecular cloning of the porcine beta-1,2-N-acetylglucosaminyltransferase II gene and assignment to chromosome 1q23-q27.</title>
        <authorList>
            <person name="Leeb T."/>
            <person name="Kriegesmann B."/>
            <person name="Baumgartner B."/>
            <person name="Klett C."/>
            <person name="Yerle M."/>
            <person name="Hameister H."/>
            <person name="Brenig B."/>
        </authorList>
    </citation>
    <scope>NUCLEOTIDE SEQUENCE [GENOMIC DNA]</scope>
    <source>
        <tissue>Brain</tissue>
        <tissue>Liver</tissue>
    </source>
</reference>
<feature type="chain" id="PRO_0000080519" description="Alpha-1,6-mannosyl-glycoprotein 2-beta-N-acetylglucosaminyltransferase">
    <location>
        <begin position="1"/>
        <end position="446"/>
    </location>
</feature>
<feature type="topological domain" description="Cytoplasmic" evidence="2">
    <location>
        <begin position="1"/>
        <end position="9"/>
    </location>
</feature>
<feature type="transmembrane region" description="Helical; Signal-anchor for type II membrane protein" evidence="2">
    <location>
        <begin position="10"/>
        <end position="29"/>
    </location>
</feature>
<feature type="topological domain" description="Lumenal" evidence="2">
    <location>
        <begin position="30"/>
        <end position="446"/>
    </location>
</feature>
<feature type="binding site" evidence="1">
    <location>
        <begin position="123"/>
        <end position="127"/>
    </location>
    <ligand>
        <name>substrate</name>
    </ligand>
</feature>
<feature type="binding site" evidence="1">
    <location>
        <position position="154"/>
    </location>
    <ligand>
        <name>substrate</name>
    </ligand>
</feature>
<feature type="binding site" evidence="1">
    <location>
        <begin position="229"/>
        <end position="233"/>
    </location>
    <ligand>
        <name>substrate</name>
    </ligand>
</feature>
<feature type="binding site" evidence="1">
    <location>
        <position position="261"/>
    </location>
    <ligand>
        <name>Mn(2+)</name>
        <dbReference type="ChEBI" id="CHEBI:29035"/>
    </ligand>
</feature>
<feature type="binding site" evidence="1">
    <location>
        <position position="298"/>
    </location>
    <ligand>
        <name>substrate</name>
    </ligand>
</feature>
<feature type="binding site" evidence="1">
    <location>
        <position position="374"/>
    </location>
    <ligand>
        <name>Mn(2+)</name>
        <dbReference type="ChEBI" id="CHEBI:29035"/>
    </ligand>
</feature>
<feature type="glycosylation site" description="N-linked (GlcNAc...) asparagine" evidence="2">
    <location>
        <position position="69"/>
    </location>
</feature>
<feature type="glycosylation site" description="N-linked (GlcNAc...) asparagine" evidence="2">
    <location>
        <position position="86"/>
    </location>
</feature>
<feature type="disulfide bond" evidence="1">
    <location>
        <begin position="196"/>
        <end position="210"/>
    </location>
</feature>
<feature type="disulfide bond" evidence="1">
    <location>
        <begin position="283"/>
        <end position="286"/>
    </location>
</feature>
<feature type="disulfide bond" evidence="1">
    <location>
        <begin position="334"/>
        <end position="357"/>
    </location>
</feature>
<feature type="disulfide bond" evidence="1">
    <location>
        <begin position="339"/>
        <end position="439"/>
    </location>
</feature>
<feature type="disulfide bond" evidence="1">
    <location>
        <begin position="378"/>
        <end position="386"/>
    </location>
</feature>
<organism>
    <name type="scientific">Sus scrofa</name>
    <name type="common">Pig</name>
    <dbReference type="NCBI Taxonomy" id="9823"/>
    <lineage>
        <taxon>Eukaryota</taxon>
        <taxon>Metazoa</taxon>
        <taxon>Chordata</taxon>
        <taxon>Craniata</taxon>
        <taxon>Vertebrata</taxon>
        <taxon>Euteleostomi</taxon>
        <taxon>Mammalia</taxon>
        <taxon>Eutheria</taxon>
        <taxon>Laurasiatheria</taxon>
        <taxon>Artiodactyla</taxon>
        <taxon>Suina</taxon>
        <taxon>Suidae</taxon>
        <taxon>Sus</taxon>
    </lineage>
</organism>
<dbReference type="EC" id="2.4.1.143" evidence="1"/>
<dbReference type="EMBL" id="Y09537">
    <property type="protein sequence ID" value="CAA70732.1"/>
    <property type="molecule type" value="Genomic_DNA"/>
</dbReference>
<dbReference type="RefSeq" id="NP_001121954.1">
    <property type="nucleotide sequence ID" value="NM_001128482.1"/>
</dbReference>
<dbReference type="SMR" id="O19071"/>
<dbReference type="FunCoup" id="O19071">
    <property type="interactions" value="919"/>
</dbReference>
<dbReference type="STRING" id="9823.ENSSSCP00000063762"/>
<dbReference type="CAZy" id="GT16">
    <property type="family name" value="Glycosyltransferase Family 16"/>
</dbReference>
<dbReference type="GlyCosmos" id="O19071">
    <property type="glycosylation" value="2 sites, No reported glycans"/>
</dbReference>
<dbReference type="GlyGen" id="O19071">
    <property type="glycosylation" value="2 sites"/>
</dbReference>
<dbReference type="PaxDb" id="9823-ENSSSCP00000005385"/>
<dbReference type="Ensembl" id="ENSSSCT00090041627">
    <property type="protein sequence ID" value="ENSSSCP00090025769"/>
    <property type="gene ID" value="ENSSSCG00090023550"/>
</dbReference>
<dbReference type="Ensembl" id="ENSSSCT00105020564">
    <property type="protein sequence ID" value="ENSSSCP00105014840"/>
    <property type="gene ID" value="ENSSSCG00105010285"/>
</dbReference>
<dbReference type="Ensembl" id="ENSSSCT00110019304">
    <property type="protein sequence ID" value="ENSSSCP00110013139"/>
    <property type="gene ID" value="ENSSSCG00110010000"/>
</dbReference>
<dbReference type="Ensembl" id="ENSSSCT00115021162">
    <property type="protein sequence ID" value="ENSSSCP00115020057"/>
    <property type="gene ID" value="ENSSSCG00115012258"/>
</dbReference>
<dbReference type="GeneID" id="100151745"/>
<dbReference type="KEGG" id="ssc:100151745"/>
<dbReference type="CTD" id="4247"/>
<dbReference type="eggNOG" id="KOG2791">
    <property type="taxonomic scope" value="Eukaryota"/>
</dbReference>
<dbReference type="HOGENOM" id="CLU_032753_2_1_1"/>
<dbReference type="InParanoid" id="O19071"/>
<dbReference type="OrthoDB" id="6019616at2759"/>
<dbReference type="TreeFam" id="TF314772"/>
<dbReference type="UniPathway" id="UPA00378"/>
<dbReference type="Proteomes" id="UP000008227">
    <property type="component" value="Unplaced"/>
</dbReference>
<dbReference type="Proteomes" id="UP000314985">
    <property type="component" value="Unplaced"/>
</dbReference>
<dbReference type="Proteomes" id="UP000694570">
    <property type="component" value="Unplaced"/>
</dbReference>
<dbReference type="Proteomes" id="UP000694571">
    <property type="component" value="Unplaced"/>
</dbReference>
<dbReference type="Proteomes" id="UP000694720">
    <property type="component" value="Unplaced"/>
</dbReference>
<dbReference type="Proteomes" id="UP000694722">
    <property type="component" value="Unplaced"/>
</dbReference>
<dbReference type="Proteomes" id="UP000694723">
    <property type="component" value="Unplaced"/>
</dbReference>
<dbReference type="Proteomes" id="UP000694724">
    <property type="component" value="Unplaced"/>
</dbReference>
<dbReference type="Proteomes" id="UP000694725">
    <property type="component" value="Unplaced"/>
</dbReference>
<dbReference type="Proteomes" id="UP000694726">
    <property type="component" value="Unplaced"/>
</dbReference>
<dbReference type="Proteomes" id="UP000694727">
    <property type="component" value="Unplaced"/>
</dbReference>
<dbReference type="Proteomes" id="UP000694728">
    <property type="component" value="Unplaced"/>
</dbReference>
<dbReference type="GO" id="GO:0000139">
    <property type="term" value="C:Golgi membrane"/>
    <property type="evidence" value="ECO:0000250"/>
    <property type="project" value="UniProtKB"/>
</dbReference>
<dbReference type="GO" id="GO:0005795">
    <property type="term" value="C:Golgi stack"/>
    <property type="evidence" value="ECO:0007669"/>
    <property type="project" value="InterPro"/>
</dbReference>
<dbReference type="GO" id="GO:0008455">
    <property type="term" value="F:alpha-1,6-mannosylglycoprotein 2-beta-N-acetylglucosaminyltransferase activity"/>
    <property type="evidence" value="ECO:0000250"/>
    <property type="project" value="UniProtKB"/>
</dbReference>
<dbReference type="GO" id="GO:0030145">
    <property type="term" value="F:manganese ion binding"/>
    <property type="evidence" value="ECO:0000250"/>
    <property type="project" value="UniProtKB"/>
</dbReference>
<dbReference type="GO" id="GO:0042803">
    <property type="term" value="F:protein homodimerization activity"/>
    <property type="evidence" value="ECO:0000250"/>
    <property type="project" value="UniProtKB"/>
</dbReference>
<dbReference type="GO" id="GO:0009312">
    <property type="term" value="P:oligosaccharide biosynthetic process"/>
    <property type="evidence" value="ECO:0007669"/>
    <property type="project" value="InterPro"/>
</dbReference>
<dbReference type="GO" id="GO:0006487">
    <property type="term" value="P:protein N-linked glycosylation"/>
    <property type="evidence" value="ECO:0000318"/>
    <property type="project" value="GO_Central"/>
</dbReference>
<dbReference type="GO" id="GO:0018279">
    <property type="term" value="P:protein N-linked glycosylation via asparagine"/>
    <property type="evidence" value="ECO:0000250"/>
    <property type="project" value="UniProtKB"/>
</dbReference>
<dbReference type="Gene3D" id="3.90.550.10">
    <property type="entry name" value="Spore Coat Polysaccharide Biosynthesis Protein SpsA, Chain A"/>
    <property type="match status" value="1"/>
</dbReference>
<dbReference type="InterPro" id="IPR007754">
    <property type="entry name" value="GlcNAc_II"/>
</dbReference>
<dbReference type="InterPro" id="IPR029044">
    <property type="entry name" value="Nucleotide-diphossugar_trans"/>
</dbReference>
<dbReference type="PANTHER" id="PTHR12871:SF0">
    <property type="entry name" value="ALPHA-1,6-MANNOSYL-GLYCOPROTEIN 2-BETA-N-ACETYLGLUCOSAMINYLTRANSFERASE"/>
    <property type="match status" value="1"/>
</dbReference>
<dbReference type="PANTHER" id="PTHR12871">
    <property type="entry name" value="BETA-1,2-N-ACETYLGLUCOSAMINYLTRANSFERASE II"/>
    <property type="match status" value="1"/>
</dbReference>
<dbReference type="Pfam" id="PF05060">
    <property type="entry name" value="MGAT2"/>
    <property type="match status" value="1"/>
</dbReference>
<dbReference type="SUPFAM" id="SSF53448">
    <property type="entry name" value="Nucleotide-diphospho-sugar transferases"/>
    <property type="match status" value="1"/>
</dbReference>
<comment type="function">
    <text evidence="1">Plays an essential role in protein N-glycosylation. Catalyzes the transfer of N-acetylglucosamine (GlcNAc) onto the free terminal mannose moiety in the core structure of the nascent N-linked glycan chain, giving rise to the second branch in complex glycans.</text>
</comment>
<comment type="catalytic activity">
    <reaction evidence="1">
        <text>an N(4)-{beta-D-GlcNAc-(1-&gt;2)-alpha-D-Man-(1-&gt;3)-[alpha-D-Man-(1-&gt;6)]-beta-D-Man-(1-&gt;4)-beta-D-GlcNAc-(1-&gt;4)-beta-D-GlcNAc}-L-asparaginyl-[protein] + UDP-N-acetyl-alpha-D-glucosamine = N(4)-{beta-D-GlcNAc-(1-&gt;2)-alpha-D-Man-(1-&gt;3)-[beta-D-GlcNAc-(1-&gt;2)-alpha-D-Man-(1-&gt;6)]-beta-D-Man-(1-&gt;4)-beta-D-GlcNAc-(1-&gt;4)-beta-D-GlcNAc}-L-asparaginyl-[protein] + UDP + H(+)</text>
        <dbReference type="Rhea" id="RHEA:12941"/>
        <dbReference type="Rhea" id="RHEA-COMP:13526"/>
        <dbReference type="Rhea" id="RHEA-COMP:14369"/>
        <dbReference type="ChEBI" id="CHEBI:15378"/>
        <dbReference type="ChEBI" id="CHEBI:57705"/>
        <dbReference type="ChEBI" id="CHEBI:58223"/>
        <dbReference type="ChEBI" id="CHEBI:60615"/>
        <dbReference type="ChEBI" id="CHEBI:60651"/>
        <dbReference type="EC" id="2.4.1.143"/>
    </reaction>
</comment>
<comment type="cofactor">
    <cofactor evidence="1">
        <name>Mn(2+)</name>
        <dbReference type="ChEBI" id="CHEBI:29035"/>
    </cofactor>
</comment>
<comment type="pathway">
    <text evidence="1">Protein modification; protein glycosylation.</text>
</comment>
<comment type="subunit">
    <text evidence="1">Homodimer.</text>
</comment>
<comment type="subcellular location">
    <subcellularLocation>
        <location evidence="1">Golgi apparatus membrane</location>
        <topology evidence="1">Single-pass type II membrane protein</topology>
    </subcellularLocation>
</comment>
<comment type="similarity">
    <text evidence="3">Belongs to the glycosyltransferase 16 (GT16) protein family.</text>
</comment>